<accession>Q82TN5</accession>
<protein>
    <recommendedName>
        <fullName evidence="1">Nucleotide-binding protein NE1849</fullName>
    </recommendedName>
</protein>
<gene>
    <name type="ordered locus">NE1849</name>
</gene>
<feature type="chain" id="PRO_0000107736" description="Nucleotide-binding protein NE1849">
    <location>
        <begin position="1"/>
        <end position="288"/>
    </location>
</feature>
<feature type="binding site" evidence="1">
    <location>
        <begin position="8"/>
        <end position="15"/>
    </location>
    <ligand>
        <name>ATP</name>
        <dbReference type="ChEBI" id="CHEBI:30616"/>
    </ligand>
</feature>
<feature type="binding site" evidence="1">
    <location>
        <begin position="57"/>
        <end position="60"/>
    </location>
    <ligand>
        <name>GTP</name>
        <dbReference type="ChEBI" id="CHEBI:37565"/>
    </ligand>
</feature>
<proteinExistence type="inferred from homology"/>
<keyword id="KW-0067">ATP-binding</keyword>
<keyword id="KW-0342">GTP-binding</keyword>
<keyword id="KW-0547">Nucleotide-binding</keyword>
<keyword id="KW-1185">Reference proteome</keyword>
<sequence>MQVIIISGLSGSGKSIALKVLEDSGYYCVDNLPASLLVVLINHLQTQQHAYVAVAIDMRSGENITVLPWQLKMIDKSIQIKFIFLEARTETLMQRFSETRRRHPLSDKNITLEEAIRREREALATLTGLGHHIDTSSLRPNVLRAFIKDFIADSRSPSQLTLLFQSFGYKHGIPLDADLVFDIRCLPNPFYDPQLKELTGHDPEVIRFMESQPDASKMLRDISSFLGTWLPAYIRDNRAYLTVAIGCTGGQHRSVYFAEKLALHFHDSAHVLVRHRGLAEYKPHYARR</sequence>
<comment type="function">
    <text evidence="1">Displays ATPase and GTPase activities.</text>
</comment>
<comment type="similarity">
    <text evidence="1">Belongs to the RapZ-like family.</text>
</comment>
<evidence type="ECO:0000255" key="1">
    <source>
        <dbReference type="HAMAP-Rule" id="MF_00636"/>
    </source>
</evidence>
<organism>
    <name type="scientific">Nitrosomonas europaea (strain ATCC 19718 / CIP 103999 / KCTC 2705 / NBRC 14298)</name>
    <dbReference type="NCBI Taxonomy" id="228410"/>
    <lineage>
        <taxon>Bacteria</taxon>
        <taxon>Pseudomonadati</taxon>
        <taxon>Pseudomonadota</taxon>
        <taxon>Betaproteobacteria</taxon>
        <taxon>Nitrosomonadales</taxon>
        <taxon>Nitrosomonadaceae</taxon>
        <taxon>Nitrosomonas</taxon>
    </lineage>
</organism>
<name>Y1849_NITEU</name>
<reference key="1">
    <citation type="journal article" date="2003" name="J. Bacteriol.">
        <title>Complete genome sequence of the ammonia-oxidizing bacterium and obligate chemolithoautotroph Nitrosomonas europaea.</title>
        <authorList>
            <person name="Chain P."/>
            <person name="Lamerdin J.E."/>
            <person name="Larimer F.W."/>
            <person name="Regala W."/>
            <person name="Lao V."/>
            <person name="Land M.L."/>
            <person name="Hauser L."/>
            <person name="Hooper A.B."/>
            <person name="Klotz M.G."/>
            <person name="Norton J."/>
            <person name="Sayavedra-Soto L.A."/>
            <person name="Arciero D.M."/>
            <person name="Hommes N.G."/>
            <person name="Whittaker M.M."/>
            <person name="Arp D.J."/>
        </authorList>
    </citation>
    <scope>NUCLEOTIDE SEQUENCE [LARGE SCALE GENOMIC DNA]</scope>
    <source>
        <strain>ATCC 19718 / CIP 103999 / KCTC 2705 / NBRC 14298</strain>
    </source>
</reference>
<dbReference type="EMBL" id="AL954747">
    <property type="protein sequence ID" value="CAD85760.1"/>
    <property type="molecule type" value="Genomic_DNA"/>
</dbReference>
<dbReference type="SMR" id="Q82TN5"/>
<dbReference type="STRING" id="228410.NE1849"/>
<dbReference type="DNASU" id="1082806"/>
<dbReference type="GeneID" id="87105008"/>
<dbReference type="KEGG" id="neu:NE1849"/>
<dbReference type="eggNOG" id="COG1660">
    <property type="taxonomic scope" value="Bacteria"/>
</dbReference>
<dbReference type="HOGENOM" id="CLU_059558_1_1_4"/>
<dbReference type="OrthoDB" id="9784461at2"/>
<dbReference type="PhylomeDB" id="Q82TN5"/>
<dbReference type="Proteomes" id="UP000001416">
    <property type="component" value="Chromosome"/>
</dbReference>
<dbReference type="GO" id="GO:0005524">
    <property type="term" value="F:ATP binding"/>
    <property type="evidence" value="ECO:0007669"/>
    <property type="project" value="UniProtKB-UniRule"/>
</dbReference>
<dbReference type="GO" id="GO:0005525">
    <property type="term" value="F:GTP binding"/>
    <property type="evidence" value="ECO:0007669"/>
    <property type="project" value="UniProtKB-UniRule"/>
</dbReference>
<dbReference type="HAMAP" id="MF_00636">
    <property type="entry name" value="RapZ_like"/>
    <property type="match status" value="1"/>
</dbReference>
<dbReference type="InterPro" id="IPR027417">
    <property type="entry name" value="P-loop_NTPase"/>
</dbReference>
<dbReference type="InterPro" id="IPR005337">
    <property type="entry name" value="RapZ-like"/>
</dbReference>
<dbReference type="InterPro" id="IPR053930">
    <property type="entry name" value="RapZ-like_N"/>
</dbReference>
<dbReference type="InterPro" id="IPR053931">
    <property type="entry name" value="RapZ_C"/>
</dbReference>
<dbReference type="NCBIfam" id="NF003828">
    <property type="entry name" value="PRK05416.1"/>
    <property type="match status" value="1"/>
</dbReference>
<dbReference type="PANTHER" id="PTHR30448">
    <property type="entry name" value="RNASE ADAPTER PROTEIN RAPZ"/>
    <property type="match status" value="1"/>
</dbReference>
<dbReference type="PANTHER" id="PTHR30448:SF0">
    <property type="entry name" value="RNASE ADAPTER PROTEIN RAPZ"/>
    <property type="match status" value="1"/>
</dbReference>
<dbReference type="Pfam" id="PF22740">
    <property type="entry name" value="PapZ_C"/>
    <property type="match status" value="1"/>
</dbReference>
<dbReference type="Pfam" id="PF03668">
    <property type="entry name" value="RapZ-like_N"/>
    <property type="match status" value="1"/>
</dbReference>
<dbReference type="PIRSF" id="PIRSF005052">
    <property type="entry name" value="P-loopkin"/>
    <property type="match status" value="1"/>
</dbReference>
<dbReference type="SUPFAM" id="SSF52540">
    <property type="entry name" value="P-loop containing nucleoside triphosphate hydrolases"/>
    <property type="match status" value="1"/>
</dbReference>